<proteinExistence type="inferred from homology"/>
<sequence length="93" mass="11066">MSVTPERKSELISEYCLKKGDTGSSFVQCAILSERIRNLTEHLKIHKKDFHCRRGLMVLVCRRRNELQYIRRKYGNDRYLALVKQLGIRDVFH</sequence>
<feature type="chain" id="PRO_0000115434" description="Small ribosomal subunit protein uS15">
    <location>
        <begin position="1"/>
        <end position="93"/>
    </location>
</feature>
<evidence type="ECO:0000255" key="1">
    <source>
        <dbReference type="HAMAP-Rule" id="MF_01343"/>
    </source>
</evidence>
<evidence type="ECO:0000305" key="2"/>
<name>RS15_EHRRW</name>
<accession>Q5HBH7</accession>
<accession>Q5FEG3</accession>
<reference key="1">
    <citation type="journal article" date="2005" name="Proc. Natl. Acad. Sci. U.S.A.">
        <title>The genome of the heartwater agent Ehrlichia ruminantium contains multiple tandem repeats of actively variable copy number.</title>
        <authorList>
            <person name="Collins N.E."/>
            <person name="Liebenberg J."/>
            <person name="de Villiers E.P."/>
            <person name="Brayton K.A."/>
            <person name="Louw E."/>
            <person name="Pretorius A."/>
            <person name="Faber F.E."/>
            <person name="van Heerden H."/>
            <person name="Josemans A."/>
            <person name="van Kleef M."/>
            <person name="Steyn H.C."/>
            <person name="van Strijp M.F."/>
            <person name="Zweygarth E."/>
            <person name="Jongejan F."/>
            <person name="Maillard J.C."/>
            <person name="Berthier D."/>
            <person name="Botha M."/>
            <person name="Joubert F."/>
            <person name="Corton C.H."/>
            <person name="Thomson N.R."/>
            <person name="Allsopp M.T."/>
            <person name="Allsopp B.A."/>
        </authorList>
    </citation>
    <scope>NUCLEOTIDE SEQUENCE [LARGE SCALE GENOMIC DNA]</scope>
    <source>
        <strain>Welgevonden</strain>
    </source>
</reference>
<reference key="2">
    <citation type="journal article" date="2006" name="J. Bacteriol.">
        <title>Comparative genomic analysis of three strains of Ehrlichia ruminantium reveals an active process of genome size plasticity.</title>
        <authorList>
            <person name="Frutos R."/>
            <person name="Viari A."/>
            <person name="Ferraz C."/>
            <person name="Morgat A."/>
            <person name="Eychenie S."/>
            <person name="Kandassamy Y."/>
            <person name="Chantal I."/>
            <person name="Bensaid A."/>
            <person name="Coissac E."/>
            <person name="Vachiery N."/>
            <person name="Demaille J."/>
            <person name="Martinez D."/>
        </authorList>
    </citation>
    <scope>NUCLEOTIDE SEQUENCE [LARGE SCALE GENOMIC DNA]</scope>
    <source>
        <strain>Welgevonden</strain>
    </source>
</reference>
<protein>
    <recommendedName>
        <fullName evidence="1">Small ribosomal subunit protein uS15</fullName>
    </recommendedName>
    <alternativeName>
        <fullName evidence="2">30S ribosomal protein S15</fullName>
    </alternativeName>
</protein>
<keyword id="KW-0687">Ribonucleoprotein</keyword>
<keyword id="KW-0689">Ribosomal protein</keyword>
<keyword id="KW-0694">RNA-binding</keyword>
<keyword id="KW-0699">rRNA-binding</keyword>
<gene>
    <name evidence="1" type="primary">rpsO</name>
    <name type="ordered locus">Erum3530</name>
    <name type="ordered locus">ERWE_CDS_03600</name>
</gene>
<organism>
    <name type="scientific">Ehrlichia ruminantium (strain Welgevonden)</name>
    <dbReference type="NCBI Taxonomy" id="254945"/>
    <lineage>
        <taxon>Bacteria</taxon>
        <taxon>Pseudomonadati</taxon>
        <taxon>Pseudomonadota</taxon>
        <taxon>Alphaproteobacteria</taxon>
        <taxon>Rickettsiales</taxon>
        <taxon>Anaplasmataceae</taxon>
        <taxon>Ehrlichia</taxon>
    </lineage>
</organism>
<dbReference type="EMBL" id="CR767821">
    <property type="protein sequence ID" value="CAH58073.1"/>
    <property type="molecule type" value="Genomic_DNA"/>
</dbReference>
<dbReference type="EMBL" id="CR925678">
    <property type="protein sequence ID" value="CAI26854.1"/>
    <property type="molecule type" value="Genomic_DNA"/>
</dbReference>
<dbReference type="RefSeq" id="WP_011155034.1">
    <property type="nucleotide sequence ID" value="NC_005295.2"/>
</dbReference>
<dbReference type="SMR" id="Q5HBH7"/>
<dbReference type="GeneID" id="33057977"/>
<dbReference type="KEGG" id="eru:Erum3530"/>
<dbReference type="KEGG" id="erw:ERWE_CDS_03600"/>
<dbReference type="eggNOG" id="COG0184">
    <property type="taxonomic scope" value="Bacteria"/>
</dbReference>
<dbReference type="HOGENOM" id="CLU_148518_0_0_5"/>
<dbReference type="Proteomes" id="UP000001021">
    <property type="component" value="Chromosome"/>
</dbReference>
<dbReference type="GO" id="GO:0022627">
    <property type="term" value="C:cytosolic small ribosomal subunit"/>
    <property type="evidence" value="ECO:0007669"/>
    <property type="project" value="TreeGrafter"/>
</dbReference>
<dbReference type="GO" id="GO:0019843">
    <property type="term" value="F:rRNA binding"/>
    <property type="evidence" value="ECO:0007669"/>
    <property type="project" value="UniProtKB-UniRule"/>
</dbReference>
<dbReference type="GO" id="GO:0003735">
    <property type="term" value="F:structural constituent of ribosome"/>
    <property type="evidence" value="ECO:0007669"/>
    <property type="project" value="InterPro"/>
</dbReference>
<dbReference type="GO" id="GO:0006412">
    <property type="term" value="P:translation"/>
    <property type="evidence" value="ECO:0007669"/>
    <property type="project" value="UniProtKB-UniRule"/>
</dbReference>
<dbReference type="CDD" id="cd00353">
    <property type="entry name" value="Ribosomal_S15p_S13e"/>
    <property type="match status" value="1"/>
</dbReference>
<dbReference type="FunFam" id="1.10.287.10:FF:000002">
    <property type="entry name" value="30S ribosomal protein S15"/>
    <property type="match status" value="1"/>
</dbReference>
<dbReference type="Gene3D" id="1.10.287.10">
    <property type="entry name" value="S15/NS1, RNA-binding"/>
    <property type="match status" value="1"/>
</dbReference>
<dbReference type="HAMAP" id="MF_01343_B">
    <property type="entry name" value="Ribosomal_uS15_B"/>
    <property type="match status" value="1"/>
</dbReference>
<dbReference type="InterPro" id="IPR000589">
    <property type="entry name" value="Ribosomal_uS15"/>
</dbReference>
<dbReference type="InterPro" id="IPR005290">
    <property type="entry name" value="Ribosomal_uS15_bac-type"/>
</dbReference>
<dbReference type="InterPro" id="IPR009068">
    <property type="entry name" value="uS15_NS1_RNA-bd_sf"/>
</dbReference>
<dbReference type="NCBIfam" id="TIGR00952">
    <property type="entry name" value="S15_bact"/>
    <property type="match status" value="1"/>
</dbReference>
<dbReference type="PANTHER" id="PTHR23321">
    <property type="entry name" value="RIBOSOMAL PROTEIN S15, BACTERIAL AND ORGANELLAR"/>
    <property type="match status" value="1"/>
</dbReference>
<dbReference type="PANTHER" id="PTHR23321:SF26">
    <property type="entry name" value="SMALL RIBOSOMAL SUBUNIT PROTEIN US15M"/>
    <property type="match status" value="1"/>
</dbReference>
<dbReference type="Pfam" id="PF00312">
    <property type="entry name" value="Ribosomal_S15"/>
    <property type="match status" value="1"/>
</dbReference>
<dbReference type="SMART" id="SM01387">
    <property type="entry name" value="Ribosomal_S15"/>
    <property type="match status" value="1"/>
</dbReference>
<dbReference type="SUPFAM" id="SSF47060">
    <property type="entry name" value="S15/NS1 RNA-binding domain"/>
    <property type="match status" value="1"/>
</dbReference>
<comment type="function">
    <text evidence="1">One of the primary rRNA binding proteins, it binds directly to 16S rRNA where it helps nucleate assembly of the platform of the 30S subunit by binding and bridging several RNA helices of the 16S rRNA.</text>
</comment>
<comment type="function">
    <text evidence="1">Forms an intersubunit bridge (bridge B4) with the 23S rRNA of the 50S subunit in the ribosome.</text>
</comment>
<comment type="subunit">
    <text evidence="1">Part of the 30S ribosomal subunit. Forms a bridge to the 50S subunit in the 70S ribosome, contacting the 23S rRNA.</text>
</comment>
<comment type="similarity">
    <text evidence="1">Belongs to the universal ribosomal protein uS15 family.</text>
</comment>